<reference key="1">
    <citation type="journal article" date="2004" name="PLoS Biol.">
        <title>Genomic insights into methanotrophy: the complete genome sequence of Methylococcus capsulatus (Bath).</title>
        <authorList>
            <person name="Ward N.L."/>
            <person name="Larsen O."/>
            <person name="Sakwa J."/>
            <person name="Bruseth L."/>
            <person name="Khouri H.M."/>
            <person name="Durkin A.S."/>
            <person name="Dimitrov G."/>
            <person name="Jiang L."/>
            <person name="Scanlan D."/>
            <person name="Kang K.H."/>
            <person name="Lewis M.R."/>
            <person name="Nelson K.E."/>
            <person name="Methe B.A."/>
            <person name="Wu M."/>
            <person name="Heidelberg J.F."/>
            <person name="Paulsen I.T."/>
            <person name="Fouts D.E."/>
            <person name="Ravel J."/>
            <person name="Tettelin H."/>
            <person name="Ren Q."/>
            <person name="Read T.D."/>
            <person name="DeBoy R.T."/>
            <person name="Seshadri R."/>
            <person name="Salzberg S.L."/>
            <person name="Jensen H.B."/>
            <person name="Birkeland N.K."/>
            <person name="Nelson W.C."/>
            <person name="Dodson R.J."/>
            <person name="Grindhaug S.H."/>
            <person name="Holt I.E."/>
            <person name="Eidhammer I."/>
            <person name="Jonasen I."/>
            <person name="Vanaken S."/>
            <person name="Utterback T.R."/>
            <person name="Feldblyum T.V."/>
            <person name="Fraser C.M."/>
            <person name="Lillehaug J.R."/>
            <person name="Eisen J.A."/>
        </authorList>
    </citation>
    <scope>NUCLEOTIDE SEQUENCE [LARGE SCALE GENOMIC DNA]</scope>
    <source>
        <strain>ATCC 33009 / NCIMB 11132 / Bath</strain>
    </source>
</reference>
<protein>
    <recommendedName>
        <fullName evidence="1">Recombination protein RecR</fullName>
    </recommendedName>
</protein>
<comment type="function">
    <text evidence="1">May play a role in DNA repair. It seems to be involved in an RecBC-independent recombinational process of DNA repair. It may act with RecF and RecO.</text>
</comment>
<comment type="similarity">
    <text evidence="1">Belongs to the RecR family.</text>
</comment>
<accession>Q609A9</accession>
<organism>
    <name type="scientific">Methylococcus capsulatus (strain ATCC 33009 / NCIMB 11132 / Bath)</name>
    <dbReference type="NCBI Taxonomy" id="243233"/>
    <lineage>
        <taxon>Bacteria</taxon>
        <taxon>Pseudomonadati</taxon>
        <taxon>Pseudomonadota</taxon>
        <taxon>Gammaproteobacteria</taxon>
        <taxon>Methylococcales</taxon>
        <taxon>Methylococcaceae</taxon>
        <taxon>Methylococcus</taxon>
    </lineage>
</organism>
<feature type="chain" id="PRO_0000190347" description="Recombination protein RecR">
    <location>
        <begin position="1"/>
        <end position="198"/>
    </location>
</feature>
<feature type="domain" description="Toprim" evidence="1">
    <location>
        <begin position="80"/>
        <end position="175"/>
    </location>
</feature>
<feature type="zinc finger region" description="C4-type" evidence="1">
    <location>
        <begin position="57"/>
        <end position="72"/>
    </location>
</feature>
<name>RECR_METCA</name>
<gene>
    <name evidence="1" type="primary">recR</name>
    <name type="ordered locus">MCA1326</name>
</gene>
<evidence type="ECO:0000255" key="1">
    <source>
        <dbReference type="HAMAP-Rule" id="MF_00017"/>
    </source>
</evidence>
<dbReference type="EMBL" id="AE017282">
    <property type="protein sequence ID" value="AAU92630.1"/>
    <property type="molecule type" value="Genomic_DNA"/>
</dbReference>
<dbReference type="RefSeq" id="WP_010960607.1">
    <property type="nucleotide sequence ID" value="NC_002977.6"/>
</dbReference>
<dbReference type="SMR" id="Q609A9"/>
<dbReference type="STRING" id="243233.MCA1326"/>
<dbReference type="GeneID" id="88223608"/>
<dbReference type="KEGG" id="mca:MCA1326"/>
<dbReference type="eggNOG" id="COG0353">
    <property type="taxonomic scope" value="Bacteria"/>
</dbReference>
<dbReference type="HOGENOM" id="CLU_060739_1_2_6"/>
<dbReference type="Proteomes" id="UP000006821">
    <property type="component" value="Chromosome"/>
</dbReference>
<dbReference type="GO" id="GO:0003677">
    <property type="term" value="F:DNA binding"/>
    <property type="evidence" value="ECO:0007669"/>
    <property type="project" value="UniProtKB-UniRule"/>
</dbReference>
<dbReference type="GO" id="GO:0008270">
    <property type="term" value="F:zinc ion binding"/>
    <property type="evidence" value="ECO:0007669"/>
    <property type="project" value="UniProtKB-KW"/>
</dbReference>
<dbReference type="GO" id="GO:0006310">
    <property type="term" value="P:DNA recombination"/>
    <property type="evidence" value="ECO:0007669"/>
    <property type="project" value="UniProtKB-UniRule"/>
</dbReference>
<dbReference type="GO" id="GO:0006281">
    <property type="term" value="P:DNA repair"/>
    <property type="evidence" value="ECO:0007669"/>
    <property type="project" value="UniProtKB-UniRule"/>
</dbReference>
<dbReference type="CDD" id="cd01025">
    <property type="entry name" value="TOPRIM_recR"/>
    <property type="match status" value="1"/>
</dbReference>
<dbReference type="Gene3D" id="3.40.1360.10">
    <property type="match status" value="1"/>
</dbReference>
<dbReference type="Gene3D" id="6.10.250.240">
    <property type="match status" value="1"/>
</dbReference>
<dbReference type="Gene3D" id="1.10.8.420">
    <property type="entry name" value="RecR Domain 1"/>
    <property type="match status" value="1"/>
</dbReference>
<dbReference type="HAMAP" id="MF_00017">
    <property type="entry name" value="RecR"/>
    <property type="match status" value="1"/>
</dbReference>
<dbReference type="InterPro" id="IPR000093">
    <property type="entry name" value="DNA_Rcmb_RecR"/>
</dbReference>
<dbReference type="InterPro" id="IPR023627">
    <property type="entry name" value="Rcmb_RecR"/>
</dbReference>
<dbReference type="InterPro" id="IPR015967">
    <property type="entry name" value="Rcmb_RecR_Znf"/>
</dbReference>
<dbReference type="InterPro" id="IPR006171">
    <property type="entry name" value="TOPRIM_dom"/>
</dbReference>
<dbReference type="InterPro" id="IPR034137">
    <property type="entry name" value="TOPRIM_RecR"/>
</dbReference>
<dbReference type="NCBIfam" id="TIGR00615">
    <property type="entry name" value="recR"/>
    <property type="match status" value="1"/>
</dbReference>
<dbReference type="PANTHER" id="PTHR30446">
    <property type="entry name" value="RECOMBINATION PROTEIN RECR"/>
    <property type="match status" value="1"/>
</dbReference>
<dbReference type="PANTHER" id="PTHR30446:SF0">
    <property type="entry name" value="RECOMBINATION PROTEIN RECR"/>
    <property type="match status" value="1"/>
</dbReference>
<dbReference type="Pfam" id="PF21175">
    <property type="entry name" value="RecR_C"/>
    <property type="match status" value="1"/>
</dbReference>
<dbReference type="Pfam" id="PF21176">
    <property type="entry name" value="RecR_HhH"/>
    <property type="match status" value="1"/>
</dbReference>
<dbReference type="Pfam" id="PF02132">
    <property type="entry name" value="RecR_ZnF"/>
    <property type="match status" value="1"/>
</dbReference>
<dbReference type="Pfam" id="PF13662">
    <property type="entry name" value="Toprim_4"/>
    <property type="match status" value="1"/>
</dbReference>
<dbReference type="SMART" id="SM00493">
    <property type="entry name" value="TOPRIM"/>
    <property type="match status" value="1"/>
</dbReference>
<dbReference type="SUPFAM" id="SSF111304">
    <property type="entry name" value="Recombination protein RecR"/>
    <property type="match status" value="1"/>
</dbReference>
<dbReference type="PROSITE" id="PS50880">
    <property type="entry name" value="TOPRIM"/>
    <property type="match status" value="1"/>
</dbReference>
<proteinExistence type="inferred from homology"/>
<keyword id="KW-0227">DNA damage</keyword>
<keyword id="KW-0233">DNA recombination</keyword>
<keyword id="KW-0234">DNA repair</keyword>
<keyword id="KW-0479">Metal-binding</keyword>
<keyword id="KW-1185">Reference proteome</keyword>
<keyword id="KW-0862">Zinc</keyword>
<keyword id="KW-0863">Zinc-finger</keyword>
<sequence>MRQAGAIAELIEALRCLPGVGPKTAQRMTLHLLQRDRDAAGRLSEALRQALEKVGLCAQCRTLTEHSLCEYCASPGRDRSLLCIVESPAEVLAISRSTGYKGLFFVLNGRLSPLDGIGPEELGLDVLEQRLKDDGVAELILATNTTVEGEATAHYLSDMARRHGVRTTRIAHGIPFGGELEYVDGATLSHAFDGRKDF</sequence>